<feature type="chain" id="PRO_0000377071" description="tRNA dimethylallyltransferase">
    <location>
        <begin position="1"/>
        <end position="320"/>
    </location>
</feature>
<feature type="region of interest" description="Interaction with substrate tRNA" evidence="1">
    <location>
        <begin position="35"/>
        <end position="38"/>
    </location>
</feature>
<feature type="region of interest" description="Interaction with substrate tRNA" evidence="1">
    <location>
        <begin position="159"/>
        <end position="163"/>
    </location>
</feature>
<feature type="region of interest" description="Interaction with substrate tRNA" evidence="1">
    <location>
        <begin position="241"/>
        <end position="246"/>
    </location>
</feature>
<feature type="binding site" evidence="1">
    <location>
        <begin position="10"/>
        <end position="17"/>
    </location>
    <ligand>
        <name>ATP</name>
        <dbReference type="ChEBI" id="CHEBI:30616"/>
    </ligand>
</feature>
<feature type="binding site" evidence="1">
    <location>
        <begin position="12"/>
        <end position="17"/>
    </location>
    <ligand>
        <name>substrate</name>
    </ligand>
</feature>
<feature type="site" description="Interaction with substrate tRNA" evidence="1">
    <location>
        <position position="101"/>
    </location>
</feature>
<feature type="site" description="Interaction with substrate tRNA" evidence="1">
    <location>
        <position position="123"/>
    </location>
</feature>
<name>MIAA_AROAE</name>
<sequence length="320" mass="35149">MQPSALLLLGPTASGKTASALALARVLPIEIVSVDSALVYRDMDIGTAKPTAAERAACPHHLVDIVSPEESYSAAHFRRDALRLIGEIHARGRIPLLAGGTMLYFKALRDGLSDLPAADADLRADIDAAAARLGWPALHAQLAQIDPDAAARLDSADAQRIQRALEIVRLTGRPLAESYARREAAALPFRMLPIALVPSDRAVLHARIEQRFDQMLAAGLIDELRALRARYTLDATLPSMRCVGYRQVWEYLDGGDDYDTMRFKGIAATRQLAKRQLTWQRQFRDSWPGLVELDCLRPDLTNAVNTAAARLLTRSRHAAH</sequence>
<evidence type="ECO:0000255" key="1">
    <source>
        <dbReference type="HAMAP-Rule" id="MF_00185"/>
    </source>
</evidence>
<evidence type="ECO:0000305" key="2"/>
<comment type="function">
    <text evidence="1">Catalyzes the transfer of a dimethylallyl group onto the adenine at position 37 in tRNAs that read codons beginning with uridine, leading to the formation of N6-(dimethylallyl)adenosine (i(6)A).</text>
</comment>
<comment type="catalytic activity">
    <reaction evidence="1">
        <text>adenosine(37) in tRNA + dimethylallyl diphosphate = N(6)-dimethylallyladenosine(37) in tRNA + diphosphate</text>
        <dbReference type="Rhea" id="RHEA:26482"/>
        <dbReference type="Rhea" id="RHEA-COMP:10162"/>
        <dbReference type="Rhea" id="RHEA-COMP:10375"/>
        <dbReference type="ChEBI" id="CHEBI:33019"/>
        <dbReference type="ChEBI" id="CHEBI:57623"/>
        <dbReference type="ChEBI" id="CHEBI:74411"/>
        <dbReference type="ChEBI" id="CHEBI:74415"/>
        <dbReference type="EC" id="2.5.1.75"/>
    </reaction>
</comment>
<comment type="cofactor">
    <cofactor evidence="1">
        <name>Mg(2+)</name>
        <dbReference type="ChEBI" id="CHEBI:18420"/>
    </cofactor>
</comment>
<comment type="subunit">
    <text evidence="1">Monomer.</text>
</comment>
<comment type="similarity">
    <text evidence="1">Belongs to the IPP transferase family.</text>
</comment>
<comment type="sequence caution" evidence="2">
    <conflict type="erroneous initiation">
        <sequence resource="EMBL-CDS" id="CAI10150"/>
    </conflict>
</comment>
<protein>
    <recommendedName>
        <fullName evidence="1">tRNA dimethylallyltransferase</fullName>
        <ecNumber evidence="1">2.5.1.75</ecNumber>
    </recommendedName>
    <alternativeName>
        <fullName evidence="1">Dimethylallyl diphosphate:tRNA dimethylallyltransferase</fullName>
        <shortName evidence="1">DMAPP:tRNA dimethylallyltransferase</shortName>
        <shortName evidence="1">DMATase</shortName>
    </alternativeName>
    <alternativeName>
        <fullName evidence="1">Isopentenyl-diphosphate:tRNA isopentenyltransferase</fullName>
        <shortName evidence="1">IPP transferase</shortName>
        <shortName evidence="1">IPPT</shortName>
        <shortName evidence="1">IPTase</shortName>
    </alternativeName>
</protein>
<accession>Q5NXR4</accession>
<gene>
    <name evidence="1" type="primary">miaA</name>
    <name type="ordered locus">AZOSEA40250</name>
    <name type="ORF">ebA7097</name>
</gene>
<keyword id="KW-0067">ATP-binding</keyword>
<keyword id="KW-0460">Magnesium</keyword>
<keyword id="KW-0547">Nucleotide-binding</keyword>
<keyword id="KW-1185">Reference proteome</keyword>
<keyword id="KW-0808">Transferase</keyword>
<keyword id="KW-0819">tRNA processing</keyword>
<dbReference type="EC" id="2.5.1.75" evidence="1"/>
<dbReference type="EMBL" id="CR555306">
    <property type="protein sequence ID" value="CAI10150.1"/>
    <property type="status" value="ALT_INIT"/>
    <property type="molecule type" value="Genomic_DNA"/>
</dbReference>
<dbReference type="RefSeq" id="WP_041646634.1">
    <property type="nucleotide sequence ID" value="NC_006513.1"/>
</dbReference>
<dbReference type="SMR" id="Q5NXR4"/>
<dbReference type="STRING" id="76114.ebA7097"/>
<dbReference type="KEGG" id="eba:ebA7097"/>
<dbReference type="eggNOG" id="COG0324">
    <property type="taxonomic scope" value="Bacteria"/>
</dbReference>
<dbReference type="HOGENOM" id="CLU_032616_0_0_4"/>
<dbReference type="OrthoDB" id="9776390at2"/>
<dbReference type="Proteomes" id="UP000006552">
    <property type="component" value="Chromosome"/>
</dbReference>
<dbReference type="GO" id="GO:0005524">
    <property type="term" value="F:ATP binding"/>
    <property type="evidence" value="ECO:0007669"/>
    <property type="project" value="UniProtKB-UniRule"/>
</dbReference>
<dbReference type="GO" id="GO:0052381">
    <property type="term" value="F:tRNA dimethylallyltransferase activity"/>
    <property type="evidence" value="ECO:0007669"/>
    <property type="project" value="UniProtKB-UniRule"/>
</dbReference>
<dbReference type="GO" id="GO:0006400">
    <property type="term" value="P:tRNA modification"/>
    <property type="evidence" value="ECO:0007669"/>
    <property type="project" value="TreeGrafter"/>
</dbReference>
<dbReference type="FunFam" id="1.10.20.140:FF:000001">
    <property type="entry name" value="tRNA dimethylallyltransferase"/>
    <property type="match status" value="1"/>
</dbReference>
<dbReference type="Gene3D" id="1.10.20.140">
    <property type="match status" value="1"/>
</dbReference>
<dbReference type="Gene3D" id="3.40.50.300">
    <property type="entry name" value="P-loop containing nucleotide triphosphate hydrolases"/>
    <property type="match status" value="1"/>
</dbReference>
<dbReference type="HAMAP" id="MF_00185">
    <property type="entry name" value="IPP_trans"/>
    <property type="match status" value="1"/>
</dbReference>
<dbReference type="InterPro" id="IPR039657">
    <property type="entry name" value="Dimethylallyltransferase"/>
</dbReference>
<dbReference type="InterPro" id="IPR018022">
    <property type="entry name" value="IPT"/>
</dbReference>
<dbReference type="InterPro" id="IPR027417">
    <property type="entry name" value="P-loop_NTPase"/>
</dbReference>
<dbReference type="NCBIfam" id="TIGR00174">
    <property type="entry name" value="miaA"/>
    <property type="match status" value="1"/>
</dbReference>
<dbReference type="PANTHER" id="PTHR11088">
    <property type="entry name" value="TRNA DIMETHYLALLYLTRANSFERASE"/>
    <property type="match status" value="1"/>
</dbReference>
<dbReference type="PANTHER" id="PTHR11088:SF60">
    <property type="entry name" value="TRNA DIMETHYLALLYLTRANSFERASE"/>
    <property type="match status" value="1"/>
</dbReference>
<dbReference type="Pfam" id="PF01715">
    <property type="entry name" value="IPPT"/>
    <property type="match status" value="1"/>
</dbReference>
<dbReference type="SUPFAM" id="SSF52540">
    <property type="entry name" value="P-loop containing nucleoside triphosphate hydrolases"/>
    <property type="match status" value="2"/>
</dbReference>
<proteinExistence type="inferred from homology"/>
<organism>
    <name type="scientific">Aromatoleum aromaticum (strain DSM 19018 / LMG 30748 / EbN1)</name>
    <name type="common">Azoarcus sp. (strain EbN1)</name>
    <dbReference type="NCBI Taxonomy" id="76114"/>
    <lineage>
        <taxon>Bacteria</taxon>
        <taxon>Pseudomonadati</taxon>
        <taxon>Pseudomonadota</taxon>
        <taxon>Betaproteobacteria</taxon>
        <taxon>Rhodocyclales</taxon>
        <taxon>Rhodocyclaceae</taxon>
        <taxon>Aromatoleum</taxon>
    </lineage>
</organism>
<reference key="1">
    <citation type="journal article" date="2005" name="Arch. Microbiol.">
        <title>The genome sequence of an anaerobic aromatic-degrading denitrifying bacterium, strain EbN1.</title>
        <authorList>
            <person name="Rabus R."/>
            <person name="Kube M."/>
            <person name="Heider J."/>
            <person name="Beck A."/>
            <person name="Heitmann K."/>
            <person name="Widdel F."/>
            <person name="Reinhardt R."/>
        </authorList>
    </citation>
    <scope>NUCLEOTIDE SEQUENCE [LARGE SCALE GENOMIC DNA]</scope>
    <source>
        <strain>DSM 19018 / LMG 30748 / EbN1</strain>
    </source>
</reference>